<sequence length="59" mass="6430">MSDIEAQRIAARIDTVLDILVAGDYHSAINNLEILRAELLDQVKDGISPSQAPGSPWEI</sequence>
<name>YCIZ_SALDC</name>
<feature type="chain" id="PRO_1000186854" description="UPF0509 protein YciZ">
    <location>
        <begin position="1"/>
        <end position="59"/>
    </location>
</feature>
<protein>
    <recommendedName>
        <fullName evidence="1">UPF0509 protein YciZ</fullName>
    </recommendedName>
</protein>
<organism>
    <name type="scientific">Salmonella dublin (strain CT_02021853)</name>
    <dbReference type="NCBI Taxonomy" id="439851"/>
    <lineage>
        <taxon>Bacteria</taxon>
        <taxon>Pseudomonadati</taxon>
        <taxon>Pseudomonadota</taxon>
        <taxon>Gammaproteobacteria</taxon>
        <taxon>Enterobacterales</taxon>
        <taxon>Enterobacteriaceae</taxon>
        <taxon>Salmonella</taxon>
    </lineage>
</organism>
<dbReference type="EMBL" id="CP001144">
    <property type="protein sequence ID" value="ACH74533.1"/>
    <property type="molecule type" value="Genomic_DNA"/>
</dbReference>
<dbReference type="RefSeq" id="WP_001279854.1">
    <property type="nucleotide sequence ID" value="NC_011205.1"/>
</dbReference>
<dbReference type="KEGG" id="sed:SeD_A1628"/>
<dbReference type="HOGENOM" id="CLU_180697_1_0_6"/>
<dbReference type="Proteomes" id="UP000008322">
    <property type="component" value="Chromosome"/>
</dbReference>
<dbReference type="HAMAP" id="MF_01641">
    <property type="entry name" value="UPF0509"/>
    <property type="match status" value="1"/>
</dbReference>
<dbReference type="InterPro" id="IPR020887">
    <property type="entry name" value="UPF0509"/>
</dbReference>
<dbReference type="NCBIfam" id="NF010179">
    <property type="entry name" value="PRK13658.1"/>
    <property type="match status" value="1"/>
</dbReference>
<dbReference type="Pfam" id="PF23675">
    <property type="entry name" value="YciZ"/>
    <property type="match status" value="1"/>
</dbReference>
<gene>
    <name evidence="1" type="primary">yciZ</name>
    <name type="ordered locus">SeD_A1628</name>
</gene>
<proteinExistence type="inferred from homology"/>
<evidence type="ECO:0000255" key="1">
    <source>
        <dbReference type="HAMAP-Rule" id="MF_01641"/>
    </source>
</evidence>
<accession>B5FU91</accession>
<reference key="1">
    <citation type="journal article" date="2011" name="J. Bacteriol.">
        <title>Comparative genomics of 28 Salmonella enterica isolates: evidence for CRISPR-mediated adaptive sublineage evolution.</title>
        <authorList>
            <person name="Fricke W.F."/>
            <person name="Mammel M.K."/>
            <person name="McDermott P.F."/>
            <person name="Tartera C."/>
            <person name="White D.G."/>
            <person name="Leclerc J.E."/>
            <person name="Ravel J."/>
            <person name="Cebula T.A."/>
        </authorList>
    </citation>
    <scope>NUCLEOTIDE SEQUENCE [LARGE SCALE GENOMIC DNA]</scope>
    <source>
        <strain>CT_02021853</strain>
    </source>
</reference>
<comment type="similarity">
    <text evidence="1">Belongs to the UPF0509 family.</text>
</comment>